<gene>
    <name evidence="4" type="primary">GOLGA8G</name>
</gene>
<proteinExistence type="evidence at transcript level"/>
<accession>P0DX53</accession>
<accession>A4FTY1</accession>
<accession>Q08AF8</accession>
<accession>Q1A5X9</accession>
<accession>Q8NDK0</accession>
<name>GOG8G_HUMAN</name>
<evidence type="ECO:0000255" key="1"/>
<evidence type="ECO:0000256" key="2">
    <source>
        <dbReference type="SAM" id="MobiDB-lite"/>
    </source>
</evidence>
<evidence type="ECO:0000305" key="3"/>
<evidence type="ECO:0000312" key="4">
    <source>
        <dbReference type="HGNC" id="HGNC:25328"/>
    </source>
</evidence>
<dbReference type="EMBL" id="AC138749">
    <property type="status" value="NOT_ANNOTATED_CDS"/>
    <property type="molecule type" value="Genomic_DNA"/>
</dbReference>
<dbReference type="EMBL" id="BC099913">
    <property type="protein sequence ID" value="AAH99913.1"/>
    <property type="status" value="ALT_SEQ"/>
    <property type="molecule type" value="mRNA"/>
</dbReference>
<dbReference type="EMBL" id="BC125193">
    <property type="protein sequence ID" value="AAI25194.1"/>
    <property type="status" value="ALT_SEQ"/>
    <property type="molecule type" value="mRNA"/>
</dbReference>
<dbReference type="EMBL" id="BC125194">
    <property type="protein sequence ID" value="AAI25195.1"/>
    <property type="status" value="ALT_SEQ"/>
    <property type="molecule type" value="mRNA"/>
</dbReference>
<dbReference type="CCDS" id="CCDS86439.1"/>
<dbReference type="RefSeq" id="NP_001337848.1">
    <molecule id="P0DX53-1"/>
    <property type="nucleotide sequence ID" value="NM_001350919.3"/>
</dbReference>
<dbReference type="SMR" id="P0DX53"/>
<dbReference type="IntAct" id="P0DX53">
    <property type="interactions" value="22"/>
</dbReference>
<dbReference type="GlyGen" id="P0DX53">
    <property type="glycosylation" value="1 site"/>
</dbReference>
<dbReference type="BioMuta" id="GOLGA8G"/>
<dbReference type="DMDM" id="121939991"/>
<dbReference type="PeptideAtlas" id="P0DX53"/>
<dbReference type="Ensembl" id="ENST00000525590.3">
    <molecule id="P0DX53-1"/>
    <property type="protein sequence ID" value="ENSP00000458130.1"/>
    <property type="gene ID" value="ENSG00000183629.14"/>
</dbReference>
<dbReference type="Ensembl" id="ENST00000612831.2">
    <molecule id="P0DX53-1"/>
    <property type="protein sequence ID" value="ENSP00000481013.2"/>
    <property type="gene ID" value="ENSG00000277090.2"/>
</dbReference>
<dbReference type="Ensembl" id="ENST00000619115.1">
    <molecule id="P0DX53-1"/>
    <property type="protein sequence ID" value="ENSP00000482881.1"/>
    <property type="gene ID" value="ENSG00000273651.4"/>
</dbReference>
<dbReference type="GeneID" id="283768"/>
<dbReference type="MANE-Select" id="ENST00000525590.3">
    <property type="protein sequence ID" value="ENSP00000458130.1"/>
    <property type="RefSeq nucleotide sequence ID" value="NM_001350919.3"/>
    <property type="RefSeq protein sequence ID" value="NP_001337848.1"/>
</dbReference>
<dbReference type="AGR" id="HGNC:25328"/>
<dbReference type="GeneCards" id="GOLGA8G"/>
<dbReference type="HGNC" id="HGNC:25328">
    <property type="gene designation" value="GOLGA8G"/>
</dbReference>
<dbReference type="HPA" id="ENSG00000153684">
    <property type="expression patterns" value="Tissue enriched (testis)"/>
</dbReference>
<dbReference type="neXtProt" id="NX_Q08AF8"/>
<dbReference type="OpenTargets" id="ENSG00000183629"/>
<dbReference type="GeneTree" id="ENSGT00530000062932"/>
<dbReference type="HOGENOM" id="CLU_012403_1_0_1"/>
<dbReference type="InParanoid" id="Q08AF8"/>
<dbReference type="OMA" id="ATSEGCH"/>
<dbReference type="PhylomeDB" id="Q08AF8"/>
<dbReference type="TreeFam" id="TF316990"/>
<dbReference type="PathwayCommons" id="Q08AF8"/>
<dbReference type="SignaLink" id="Q08AF8"/>
<dbReference type="Proteomes" id="UP000005640">
    <property type="component" value="Chromosome 15"/>
</dbReference>
<dbReference type="GO" id="GO:0005801">
    <property type="term" value="C:cis-Golgi network"/>
    <property type="evidence" value="ECO:0007669"/>
    <property type="project" value="InterPro"/>
</dbReference>
<dbReference type="InterPro" id="IPR043937">
    <property type="entry name" value="GM130_C"/>
</dbReference>
<dbReference type="InterPro" id="IPR043976">
    <property type="entry name" value="GOLGA_cons_dom"/>
</dbReference>
<dbReference type="InterPro" id="IPR024858">
    <property type="entry name" value="Golgin_A"/>
</dbReference>
<dbReference type="PANTHER" id="PTHR10881:SF7">
    <property type="entry name" value="GOLGIN SUBFAMILY A MEMBER 8C-RELATED"/>
    <property type="match status" value="1"/>
</dbReference>
<dbReference type="PANTHER" id="PTHR10881">
    <property type="entry name" value="GOLGIN SUBFAMILY A MEMBER-RELATED"/>
    <property type="match status" value="1"/>
</dbReference>
<dbReference type="Pfam" id="PF19046">
    <property type="entry name" value="GM130_C"/>
    <property type="match status" value="1"/>
</dbReference>
<dbReference type="Pfam" id="PF15070">
    <property type="entry name" value="GOLGA2L5"/>
    <property type="match status" value="2"/>
</dbReference>
<protein>
    <recommendedName>
        <fullName evidence="3">Golgin subfamily A member 8G</fullName>
    </recommendedName>
</protein>
<keyword id="KW-0025">Alternative splicing</keyword>
<keyword id="KW-0175">Coiled coil</keyword>
<keyword id="KW-1185">Reference proteome</keyword>
<sequence>MWPQARLPPHPAMAEETRQSKLAAAKRKLKEYWQRNSPGVPAGAKRNRKTNGSIHETATSGGCHSPGDSATGIHGESPTSSATLKDLESPCQELAVVPDSRSVKVSQLKNTIKSLKQQNKQVEHQLEEEKKANNEKQKAERELEVQIQRLNIQKGKLNTDLYHTKRSLRYFEEESKDLAVRLQHSLQRKGELERALSAVTATQKKKAERQFSSRSKARMEWKLEQSMREQALLKAQLTQLKESLKEVQLERDEYAEHLKGERARWQQRMRKMSQEVCSLKKEKKHDKYRVEKLERSLSKLKHQMAEPLPPEPPAVPSEVELQHLRKELERVAGELQAQVEYNQRISLLNEGQKERLREQEERLQEQQERLPEQEERLQQLAEPQNSFKELNNENKSVLQLEQQVKELQEKLGKERLEAASQQKQQLTAQLSLMALPGEGDGGGHLDSEGEEAPRPIPSIPQDLESREAMSGFMDHLEEKADLSELVEKEELGFFQYYRERCHQKVYHPITKPGGSAKDAAPGGGHHQAGPGQGGDEGEAAGAAGDGVAAGGDYKGHSKFLVTAQNPAHEPSPGAPAPQELGAAHKHGDLCEVSLTDSVEPVQGEAREGSPHDNPTAQPIVQDHQEHPGLGSNCCVPFFCWAWLPRRRR</sequence>
<organism>
    <name type="scientific">Homo sapiens</name>
    <name type="common">Human</name>
    <dbReference type="NCBI Taxonomy" id="9606"/>
    <lineage>
        <taxon>Eukaryota</taxon>
        <taxon>Metazoa</taxon>
        <taxon>Chordata</taxon>
        <taxon>Craniata</taxon>
        <taxon>Vertebrata</taxon>
        <taxon>Euteleostomi</taxon>
        <taxon>Mammalia</taxon>
        <taxon>Eutheria</taxon>
        <taxon>Euarchontoglires</taxon>
        <taxon>Primates</taxon>
        <taxon>Haplorrhini</taxon>
        <taxon>Catarrhini</taxon>
        <taxon>Hominidae</taxon>
        <taxon>Homo</taxon>
    </lineage>
</organism>
<feature type="chain" id="PRO_0000314968" description="Golgin subfamily A member 8G">
    <location>
        <begin position="1"/>
        <end position="648"/>
    </location>
</feature>
<feature type="region of interest" description="Disordered" evidence="2">
    <location>
        <begin position="1"/>
        <end position="84"/>
    </location>
</feature>
<feature type="region of interest" description="Disordered" evidence="2">
    <location>
        <begin position="119"/>
        <end position="139"/>
    </location>
</feature>
<feature type="region of interest" description="Disordered" evidence="2">
    <location>
        <begin position="356"/>
        <end position="376"/>
    </location>
</feature>
<feature type="region of interest" description="Disordered" evidence="2">
    <location>
        <begin position="434"/>
        <end position="461"/>
    </location>
</feature>
<feature type="region of interest" description="Disordered" evidence="2">
    <location>
        <begin position="508"/>
        <end position="549"/>
    </location>
</feature>
<feature type="region of interest" description="Disordered" evidence="2">
    <location>
        <begin position="600"/>
        <end position="624"/>
    </location>
</feature>
<feature type="coiled-coil region" evidence="1">
    <location>
        <begin position="105"/>
        <end position="160"/>
    </location>
</feature>
<feature type="coiled-coil region" evidence="1">
    <location>
        <begin position="223"/>
        <end position="275"/>
    </location>
</feature>
<feature type="coiled-coil region" evidence="1">
    <location>
        <begin position="318"/>
        <end position="424"/>
    </location>
</feature>
<feature type="compositionally biased region" description="Pro residues" evidence="2">
    <location>
        <begin position="1"/>
        <end position="11"/>
    </location>
</feature>
<feature type="compositionally biased region" description="Polar residues" evidence="2">
    <location>
        <begin position="50"/>
        <end position="62"/>
    </location>
</feature>
<feature type="compositionally biased region" description="Basic and acidic residues" evidence="2">
    <location>
        <begin position="121"/>
        <end position="139"/>
    </location>
</feature>
<feature type="compositionally biased region" description="Basic and acidic residues" evidence="2">
    <location>
        <begin position="441"/>
        <end position="453"/>
    </location>
</feature>
<feature type="compositionally biased region" description="Gly residues" evidence="2">
    <location>
        <begin position="521"/>
        <end position="534"/>
    </location>
</feature>
<feature type="splice variant" id="VSP_062047" description="In isoform 4.">
    <original>KQQNKQVEHQLEEEKKANNEKQKAERELEVQIQRLNIQKGKLNTDLYHTKRSLRYFEEESKDLAVRLQHSLQRKGELERALSAVTATQKK</original>
    <variation>VRVHWGPLIPRCQSWALVSPWGPEERGRRPLVPRANRELGRPGLTWRDPGACSMALFLLPCLLTLPSPDAPARVLATHALGLLPLGEVLA</variation>
    <location>
        <begin position="116"/>
        <end position="205"/>
    </location>
</feature>
<feature type="splice variant" id="VSP_062048" description="In isoform 5.">
    <original>EK</original>
    <variation>VT</variation>
    <location>
        <begin position="129"/>
        <end position="130"/>
    </location>
</feature>
<feature type="splice variant" id="VSP_062049" description="In isoform 5.">
    <location>
        <begin position="131"/>
        <end position="648"/>
    </location>
</feature>
<feature type="splice variant" id="VSP_062050" description="In isoform 4.">
    <location>
        <begin position="206"/>
        <end position="648"/>
    </location>
</feature>
<feature type="sequence conflict" description="In Ref. 2; AAI25194." evidence="3" ref="2">
    <original>NKQVE</original>
    <variation>KKQVV</variation>
    <location>
        <begin position="119"/>
        <end position="123"/>
    </location>
</feature>
<reference key="1">
    <citation type="journal article" date="2006" name="Nature">
        <title>Analysis of the DNA sequence and duplication history of human chromosome 15.</title>
        <authorList>
            <person name="Zody M.C."/>
            <person name="Garber M."/>
            <person name="Sharpe T."/>
            <person name="Young S.K."/>
            <person name="Rowen L."/>
            <person name="O'Neill K."/>
            <person name="Whittaker C.A."/>
            <person name="Kamal M."/>
            <person name="Chang J.L."/>
            <person name="Cuomo C.A."/>
            <person name="Dewar K."/>
            <person name="FitzGerald M.G."/>
            <person name="Kodira C.D."/>
            <person name="Madan A."/>
            <person name="Qin S."/>
            <person name="Yang X."/>
            <person name="Abbasi N."/>
            <person name="Abouelleil A."/>
            <person name="Arachchi H.M."/>
            <person name="Baradarani L."/>
            <person name="Birditt B."/>
            <person name="Bloom S."/>
            <person name="Bloom T."/>
            <person name="Borowsky M.L."/>
            <person name="Burke J."/>
            <person name="Butler J."/>
            <person name="Cook A."/>
            <person name="DeArellano K."/>
            <person name="DeCaprio D."/>
            <person name="Dorris L. III"/>
            <person name="Dors M."/>
            <person name="Eichler E.E."/>
            <person name="Engels R."/>
            <person name="Fahey J."/>
            <person name="Fleetwood P."/>
            <person name="Friedman C."/>
            <person name="Gearin G."/>
            <person name="Hall J.L."/>
            <person name="Hensley G."/>
            <person name="Johnson E."/>
            <person name="Jones C."/>
            <person name="Kamat A."/>
            <person name="Kaur A."/>
            <person name="Locke D.P."/>
            <person name="Madan A."/>
            <person name="Munson G."/>
            <person name="Jaffe D.B."/>
            <person name="Lui A."/>
            <person name="Macdonald P."/>
            <person name="Mauceli E."/>
            <person name="Naylor J.W."/>
            <person name="Nesbitt R."/>
            <person name="Nicol R."/>
            <person name="O'Leary S.B."/>
            <person name="Ratcliffe A."/>
            <person name="Rounsley S."/>
            <person name="She X."/>
            <person name="Sneddon K.M.B."/>
            <person name="Stewart S."/>
            <person name="Sougnez C."/>
            <person name="Stone S.M."/>
            <person name="Topham K."/>
            <person name="Vincent D."/>
            <person name="Wang S."/>
            <person name="Zimmer A.R."/>
            <person name="Birren B.W."/>
            <person name="Hood L."/>
            <person name="Lander E.S."/>
            <person name="Nusbaum C."/>
        </authorList>
    </citation>
    <scope>NUCLEOTIDE SEQUENCE [LARGE SCALE GENOMIC DNA]</scope>
</reference>
<reference key="2">
    <citation type="journal article" date="2004" name="Genome Res.">
        <title>The status, quality, and expansion of the NIH full-length cDNA project: the Mammalian Gene Collection (MGC).</title>
        <authorList>
            <consortium name="The MGC Project Team"/>
        </authorList>
    </citation>
    <scope>NUCLEOTIDE SEQUENCE [LARGE SCALE MRNA] (ISOFORM 4)</scope>
    <scope>NUCLEOTIDE SEQUENCE [LARGE SCALE MRNA] OF 41-648 (ISOFORM 5)</scope>
    <source>
        <tissue>Testis</tissue>
    </source>
</reference>
<comment type="alternative products">
    <event type="alternative splicing"/>
    <isoform>
        <id>P0DX53-1</id>
        <id>Q08AF8-1</id>
        <name>1</name>
        <sequence type="displayed"/>
    </isoform>
    <isoform>
        <id>P0DX53-4</id>
        <name>4</name>
        <sequence type="described" ref="VSP_062047 VSP_062050"/>
    </isoform>
    <isoform>
        <id>P0DX53-5</id>
        <name>5</name>
        <sequence type="described" ref="VSP_062048 VSP_062049"/>
    </isoform>
</comment>
<comment type="miscellaneous">
    <molecule>Isoform 4</molecule>
    <text evidence="3">May be produced at very low levels due to a premature stop codon in the mRNA, leading to nonsense-mediated mRNA decay.</text>
</comment>
<comment type="miscellaneous">
    <molecule>Isoform 5</molecule>
    <text evidence="3">May be produced at very low levels due to a premature stop codon in the mRNA, leading to nonsense-mediated mRNA decay.</text>
</comment>
<comment type="similarity">
    <text evidence="3">Belongs to the GOLGA8 family.</text>
</comment>
<comment type="caution">
    <text evidence="3">A family of highly similar proteins (GOLGA8A, GOLGA8B, GOLGA8C, GOLGA8D, GOLGA8E, GOLGA8F, GOLGA8G) are encoded by a repeated region on chromosome 15q11-15q13. Our sequences are in agreement with HGNC nomenclature.</text>
</comment>
<comment type="sequence caution" evidence="3">
    <conflict type="erroneous translation">
        <sequence resource="EMBL-CDS" id="AAH99913"/>
    </conflict>
    <text>Wrong choice of CDS.</text>
</comment>
<comment type="sequence caution" evidence="3">
    <conflict type="erroneous translation">
        <sequence resource="EMBL-CDS" id="AAI25194"/>
    </conflict>
    <text>Wrong choice of CDS.</text>
</comment>
<comment type="sequence caution" evidence="3">
    <conflict type="erroneous translation">
        <sequence resource="EMBL-CDS" id="AAI25195"/>
    </conflict>
    <text>Wrong choice of CDS.</text>
</comment>